<proteinExistence type="inferred from homology"/>
<protein>
    <recommendedName>
        <fullName evidence="1">Methylenetetrahydrofolate--tRNA-(uracil-5-)-methyltransferase TrmFO</fullName>
        <ecNumber evidence="1">2.1.1.74</ecNumber>
    </recommendedName>
    <alternativeName>
        <fullName evidence="1">Folate-dependent tRNA (uracil-5-)-methyltransferase</fullName>
    </alternativeName>
    <alternativeName>
        <fullName evidence="1">Folate-dependent tRNA(M-5-U54)-methyltransferase</fullName>
    </alternativeName>
</protein>
<gene>
    <name evidence="1" type="primary">trmFO</name>
    <name type="synonym">gid</name>
    <name type="ordered locus">tlr0450</name>
</gene>
<sequence>MEPITVIGGGLAGTEAAWQIARAGLPVVLYEMRPQVASPAHHTAELAELVCSNSFGAKASDRATGLLHHELRALGSLIIATADRHQVPAGGALAVDRAHFSRELTETLENHPLVTVRREELPHLPESGIVVLATGPLTSEALSADLQCFTGLDYLSFFDAASPIVVGESINREVAFLASRYDRGEAAYLNCPFSAEEYQRFWQALCEAKQAPLKDFERENAQFFEACLPVEELARRGVDTLRFGPLKPVGLRDPRTGERPYAVAQLRQEDRHGQLWNLVGFQTNLRWGEQQRVFRMIPGLEQAEFVRMGVMHRNTFLNAPKLLKASLQFRDRPTLLAAGQITGTEGYTAAAAGGWLAGTNAARLARGLAPLVLPPTTMAGALFHYISTAESKTFQPMPPNFGILPPLEQPVRQKALRYAAYRDRALKDLSTWATAMSLPLQPLALDGCDPAAVEAGA</sequence>
<name>TRMFO_THEVB</name>
<comment type="function">
    <text evidence="1">Catalyzes the folate-dependent formation of 5-methyl-uridine at position 54 (M-5-U54) in all tRNAs.</text>
</comment>
<comment type="catalytic activity">
    <reaction evidence="1">
        <text>uridine(54) in tRNA + (6R)-5,10-methylene-5,6,7,8-tetrahydrofolate + NADH + H(+) = 5-methyluridine(54) in tRNA + (6S)-5,6,7,8-tetrahydrofolate + NAD(+)</text>
        <dbReference type="Rhea" id="RHEA:16873"/>
        <dbReference type="Rhea" id="RHEA-COMP:10167"/>
        <dbReference type="Rhea" id="RHEA-COMP:10193"/>
        <dbReference type="ChEBI" id="CHEBI:15378"/>
        <dbReference type="ChEBI" id="CHEBI:15636"/>
        <dbReference type="ChEBI" id="CHEBI:57453"/>
        <dbReference type="ChEBI" id="CHEBI:57540"/>
        <dbReference type="ChEBI" id="CHEBI:57945"/>
        <dbReference type="ChEBI" id="CHEBI:65315"/>
        <dbReference type="ChEBI" id="CHEBI:74447"/>
        <dbReference type="EC" id="2.1.1.74"/>
    </reaction>
</comment>
<comment type="catalytic activity">
    <reaction evidence="1">
        <text>uridine(54) in tRNA + (6R)-5,10-methylene-5,6,7,8-tetrahydrofolate + NADPH + H(+) = 5-methyluridine(54) in tRNA + (6S)-5,6,7,8-tetrahydrofolate + NADP(+)</text>
        <dbReference type="Rhea" id="RHEA:62372"/>
        <dbReference type="Rhea" id="RHEA-COMP:10167"/>
        <dbReference type="Rhea" id="RHEA-COMP:10193"/>
        <dbReference type="ChEBI" id="CHEBI:15378"/>
        <dbReference type="ChEBI" id="CHEBI:15636"/>
        <dbReference type="ChEBI" id="CHEBI:57453"/>
        <dbReference type="ChEBI" id="CHEBI:57783"/>
        <dbReference type="ChEBI" id="CHEBI:58349"/>
        <dbReference type="ChEBI" id="CHEBI:65315"/>
        <dbReference type="ChEBI" id="CHEBI:74447"/>
        <dbReference type="EC" id="2.1.1.74"/>
    </reaction>
</comment>
<comment type="cofactor">
    <cofactor evidence="1">
        <name>FAD</name>
        <dbReference type="ChEBI" id="CHEBI:57692"/>
    </cofactor>
</comment>
<comment type="subcellular location">
    <subcellularLocation>
        <location evidence="1">Cytoplasm</location>
    </subcellularLocation>
</comment>
<comment type="similarity">
    <text evidence="1">Belongs to the MnmG family. TrmFO subfamily.</text>
</comment>
<organism>
    <name type="scientific">Thermosynechococcus vestitus (strain NIES-2133 / IAM M-273 / BP-1)</name>
    <dbReference type="NCBI Taxonomy" id="197221"/>
    <lineage>
        <taxon>Bacteria</taxon>
        <taxon>Bacillati</taxon>
        <taxon>Cyanobacteriota</taxon>
        <taxon>Cyanophyceae</taxon>
        <taxon>Acaryochloridales</taxon>
        <taxon>Thermosynechococcaceae</taxon>
        <taxon>Thermosynechococcus</taxon>
    </lineage>
</organism>
<feature type="chain" id="PRO_0000117281" description="Methylenetetrahydrofolate--tRNA-(uracil-5-)-methyltransferase TrmFO">
    <location>
        <begin position="1"/>
        <end position="457"/>
    </location>
</feature>
<feature type="binding site" evidence="1">
    <location>
        <begin position="8"/>
        <end position="13"/>
    </location>
    <ligand>
        <name>FAD</name>
        <dbReference type="ChEBI" id="CHEBI:57692"/>
    </ligand>
</feature>
<keyword id="KW-0963">Cytoplasm</keyword>
<keyword id="KW-0274">FAD</keyword>
<keyword id="KW-0285">Flavoprotein</keyword>
<keyword id="KW-0489">Methyltransferase</keyword>
<keyword id="KW-0520">NAD</keyword>
<keyword id="KW-0521">NADP</keyword>
<keyword id="KW-1185">Reference proteome</keyword>
<keyword id="KW-0808">Transferase</keyword>
<keyword id="KW-0819">tRNA processing</keyword>
<accession>P59109</accession>
<evidence type="ECO:0000255" key="1">
    <source>
        <dbReference type="HAMAP-Rule" id="MF_01037"/>
    </source>
</evidence>
<dbReference type="EC" id="2.1.1.74" evidence="1"/>
<dbReference type="EMBL" id="BA000039">
    <property type="protein sequence ID" value="BAC08002.1"/>
    <property type="molecule type" value="Genomic_DNA"/>
</dbReference>
<dbReference type="RefSeq" id="NP_681240.1">
    <property type="nucleotide sequence ID" value="NC_004113.1"/>
</dbReference>
<dbReference type="RefSeq" id="WP_011056303.1">
    <property type="nucleotide sequence ID" value="NC_004113.1"/>
</dbReference>
<dbReference type="SMR" id="P59109"/>
<dbReference type="STRING" id="197221.gene:10747039"/>
<dbReference type="EnsemblBacteria" id="BAC08002">
    <property type="protein sequence ID" value="BAC08002"/>
    <property type="gene ID" value="BAC08002"/>
</dbReference>
<dbReference type="KEGG" id="tel:tlr0450"/>
<dbReference type="PATRIC" id="fig|197221.4.peg.474"/>
<dbReference type="eggNOG" id="COG1206">
    <property type="taxonomic scope" value="Bacteria"/>
</dbReference>
<dbReference type="Proteomes" id="UP000000440">
    <property type="component" value="Chromosome"/>
</dbReference>
<dbReference type="GO" id="GO:0005829">
    <property type="term" value="C:cytosol"/>
    <property type="evidence" value="ECO:0007669"/>
    <property type="project" value="TreeGrafter"/>
</dbReference>
<dbReference type="GO" id="GO:0050660">
    <property type="term" value="F:flavin adenine dinucleotide binding"/>
    <property type="evidence" value="ECO:0007669"/>
    <property type="project" value="UniProtKB-UniRule"/>
</dbReference>
<dbReference type="GO" id="GO:0047151">
    <property type="term" value="F:tRNA (uracil(54)-C5)-methyltransferase activity, 5,10-methylenetetrahydrofolate-dependent"/>
    <property type="evidence" value="ECO:0007669"/>
    <property type="project" value="UniProtKB-UniRule"/>
</dbReference>
<dbReference type="GO" id="GO:0030488">
    <property type="term" value="P:tRNA methylation"/>
    <property type="evidence" value="ECO:0007669"/>
    <property type="project" value="TreeGrafter"/>
</dbReference>
<dbReference type="GO" id="GO:0002098">
    <property type="term" value="P:tRNA wobble uridine modification"/>
    <property type="evidence" value="ECO:0007669"/>
    <property type="project" value="TreeGrafter"/>
</dbReference>
<dbReference type="Gene3D" id="3.50.50.60">
    <property type="entry name" value="FAD/NAD(P)-binding domain"/>
    <property type="match status" value="2"/>
</dbReference>
<dbReference type="HAMAP" id="MF_01037">
    <property type="entry name" value="TrmFO"/>
    <property type="match status" value="1"/>
</dbReference>
<dbReference type="InterPro" id="IPR036188">
    <property type="entry name" value="FAD/NAD-bd_sf"/>
</dbReference>
<dbReference type="InterPro" id="IPR002218">
    <property type="entry name" value="MnmG-rel"/>
</dbReference>
<dbReference type="InterPro" id="IPR020595">
    <property type="entry name" value="MnmG-rel_CS"/>
</dbReference>
<dbReference type="InterPro" id="IPR040131">
    <property type="entry name" value="MnmG_N"/>
</dbReference>
<dbReference type="InterPro" id="IPR004417">
    <property type="entry name" value="TrmFO"/>
</dbReference>
<dbReference type="NCBIfam" id="TIGR00137">
    <property type="entry name" value="gid_trmFO"/>
    <property type="match status" value="1"/>
</dbReference>
<dbReference type="NCBIfam" id="NF003739">
    <property type="entry name" value="PRK05335.1"/>
    <property type="match status" value="1"/>
</dbReference>
<dbReference type="PANTHER" id="PTHR11806">
    <property type="entry name" value="GLUCOSE INHIBITED DIVISION PROTEIN A"/>
    <property type="match status" value="1"/>
</dbReference>
<dbReference type="PANTHER" id="PTHR11806:SF2">
    <property type="entry name" value="METHYLENETETRAHYDROFOLATE--TRNA-(URACIL-5-)-METHYLTRANSFERASE TRMFO"/>
    <property type="match status" value="1"/>
</dbReference>
<dbReference type="Pfam" id="PF01134">
    <property type="entry name" value="GIDA"/>
    <property type="match status" value="1"/>
</dbReference>
<dbReference type="SUPFAM" id="SSF51905">
    <property type="entry name" value="FAD/NAD(P)-binding domain"/>
    <property type="match status" value="1"/>
</dbReference>
<dbReference type="PROSITE" id="PS01281">
    <property type="entry name" value="GIDA_2"/>
    <property type="match status" value="1"/>
</dbReference>
<reference key="1">
    <citation type="journal article" date="2002" name="DNA Res.">
        <title>Complete genome structure of the thermophilic cyanobacterium Thermosynechococcus elongatus BP-1.</title>
        <authorList>
            <person name="Nakamura Y."/>
            <person name="Kaneko T."/>
            <person name="Sato S."/>
            <person name="Ikeuchi M."/>
            <person name="Katoh H."/>
            <person name="Sasamoto S."/>
            <person name="Watanabe A."/>
            <person name="Iriguchi M."/>
            <person name="Kawashima K."/>
            <person name="Kimura T."/>
            <person name="Kishida Y."/>
            <person name="Kiyokawa C."/>
            <person name="Kohara M."/>
            <person name="Matsumoto M."/>
            <person name="Matsuno A."/>
            <person name="Nakazaki N."/>
            <person name="Shimpo S."/>
            <person name="Sugimoto M."/>
            <person name="Takeuchi C."/>
            <person name="Yamada M."/>
            <person name="Tabata S."/>
        </authorList>
    </citation>
    <scope>NUCLEOTIDE SEQUENCE [LARGE SCALE GENOMIC DNA]</scope>
    <source>
        <strain>NIES-2133 / IAM M-273 / BP-1</strain>
    </source>
</reference>